<name>SECA1_ALKMQ</name>
<gene>
    <name evidence="1" type="primary">secA1</name>
    <name type="ordered locus">Amet_0790</name>
</gene>
<reference key="1">
    <citation type="journal article" date="2016" name="Genome Announc.">
        <title>Complete genome sequence of Alkaliphilus metalliredigens strain QYMF, an alkaliphilic and metal-reducing bacterium isolated from borax-contaminated leachate ponds.</title>
        <authorList>
            <person name="Hwang C."/>
            <person name="Copeland A."/>
            <person name="Lucas S."/>
            <person name="Lapidus A."/>
            <person name="Barry K."/>
            <person name="Detter J.C."/>
            <person name="Glavina Del Rio T."/>
            <person name="Hammon N."/>
            <person name="Israni S."/>
            <person name="Dalin E."/>
            <person name="Tice H."/>
            <person name="Pitluck S."/>
            <person name="Chertkov O."/>
            <person name="Brettin T."/>
            <person name="Bruce D."/>
            <person name="Han C."/>
            <person name="Schmutz J."/>
            <person name="Larimer F."/>
            <person name="Land M.L."/>
            <person name="Hauser L."/>
            <person name="Kyrpides N."/>
            <person name="Mikhailova N."/>
            <person name="Ye Q."/>
            <person name="Zhou J."/>
            <person name="Richardson P."/>
            <person name="Fields M.W."/>
        </authorList>
    </citation>
    <scope>NUCLEOTIDE SEQUENCE [LARGE SCALE GENOMIC DNA]</scope>
    <source>
        <strain>QYMF</strain>
    </source>
</reference>
<proteinExistence type="inferred from homology"/>
<feature type="chain" id="PRO_0000320720" description="Protein translocase subunit SecA 1">
    <location>
        <begin position="1"/>
        <end position="891"/>
    </location>
</feature>
<feature type="region of interest" description="Disordered" evidence="2">
    <location>
        <begin position="845"/>
        <end position="891"/>
    </location>
</feature>
<feature type="compositionally biased region" description="Basic and acidic residues" evidence="2">
    <location>
        <begin position="845"/>
        <end position="873"/>
    </location>
</feature>
<feature type="binding site" evidence="1">
    <location>
        <position position="86"/>
    </location>
    <ligand>
        <name>ATP</name>
        <dbReference type="ChEBI" id="CHEBI:30616"/>
    </ligand>
</feature>
<feature type="binding site" evidence="1">
    <location>
        <begin position="104"/>
        <end position="108"/>
    </location>
    <ligand>
        <name>ATP</name>
        <dbReference type="ChEBI" id="CHEBI:30616"/>
    </ligand>
</feature>
<feature type="binding site" evidence="1">
    <location>
        <position position="493"/>
    </location>
    <ligand>
        <name>ATP</name>
        <dbReference type="ChEBI" id="CHEBI:30616"/>
    </ligand>
</feature>
<feature type="binding site" evidence="1">
    <location>
        <position position="877"/>
    </location>
    <ligand>
        <name>Zn(2+)</name>
        <dbReference type="ChEBI" id="CHEBI:29105"/>
    </ligand>
</feature>
<feature type="binding site" evidence="1">
    <location>
        <position position="879"/>
    </location>
    <ligand>
        <name>Zn(2+)</name>
        <dbReference type="ChEBI" id="CHEBI:29105"/>
    </ligand>
</feature>
<feature type="binding site" evidence="1">
    <location>
        <position position="888"/>
    </location>
    <ligand>
        <name>Zn(2+)</name>
        <dbReference type="ChEBI" id="CHEBI:29105"/>
    </ligand>
</feature>
<feature type="binding site" evidence="1">
    <location>
        <position position="889"/>
    </location>
    <ligand>
        <name>Zn(2+)</name>
        <dbReference type="ChEBI" id="CHEBI:29105"/>
    </ligand>
</feature>
<comment type="function">
    <text evidence="1">Part of the Sec protein translocase complex. Interacts with the SecYEG preprotein conducting channel. Has a central role in coupling the hydrolysis of ATP to the transfer of proteins into and across the cell membrane, serving as an ATP-driven molecular motor driving the stepwise translocation of polypeptide chains across the membrane.</text>
</comment>
<comment type="catalytic activity">
    <reaction evidence="1">
        <text>ATP + H2O + cellular proteinSide 1 = ADP + phosphate + cellular proteinSide 2.</text>
        <dbReference type="EC" id="7.4.2.8"/>
    </reaction>
</comment>
<comment type="cofactor">
    <cofactor evidence="1">
        <name>Zn(2+)</name>
        <dbReference type="ChEBI" id="CHEBI:29105"/>
    </cofactor>
    <text evidence="1">May bind 1 zinc ion per subunit.</text>
</comment>
<comment type="subunit">
    <text evidence="1">Monomer and homodimer. Part of the essential Sec protein translocation apparatus which comprises SecA, SecYEG and auxiliary proteins SecDF. Other proteins may also be involved.</text>
</comment>
<comment type="subcellular location">
    <subcellularLocation>
        <location evidence="1">Cell membrane</location>
        <topology evidence="1">Peripheral membrane protein</topology>
        <orientation evidence="1">Cytoplasmic side</orientation>
    </subcellularLocation>
    <subcellularLocation>
        <location evidence="1">Cytoplasm</location>
    </subcellularLocation>
    <text evidence="1">Distribution is 50-50.</text>
</comment>
<comment type="similarity">
    <text evidence="1">Belongs to the SecA family.</text>
</comment>
<accession>A6TLE7</accession>
<organism>
    <name type="scientific">Alkaliphilus metalliredigens (strain QYMF)</name>
    <dbReference type="NCBI Taxonomy" id="293826"/>
    <lineage>
        <taxon>Bacteria</taxon>
        <taxon>Bacillati</taxon>
        <taxon>Bacillota</taxon>
        <taxon>Clostridia</taxon>
        <taxon>Peptostreptococcales</taxon>
        <taxon>Natronincolaceae</taxon>
        <taxon>Alkaliphilus</taxon>
    </lineage>
</organism>
<keyword id="KW-0067">ATP-binding</keyword>
<keyword id="KW-1003">Cell membrane</keyword>
<keyword id="KW-0963">Cytoplasm</keyword>
<keyword id="KW-0472">Membrane</keyword>
<keyword id="KW-0479">Metal-binding</keyword>
<keyword id="KW-0547">Nucleotide-binding</keyword>
<keyword id="KW-0653">Protein transport</keyword>
<keyword id="KW-1185">Reference proteome</keyword>
<keyword id="KW-1278">Translocase</keyword>
<keyword id="KW-0811">Translocation</keyword>
<keyword id="KW-0813">Transport</keyword>
<keyword id="KW-0862">Zinc</keyword>
<protein>
    <recommendedName>
        <fullName evidence="1">Protein translocase subunit SecA 1</fullName>
        <ecNumber evidence="1">7.4.2.8</ecNumber>
    </recommendedName>
</protein>
<evidence type="ECO:0000255" key="1">
    <source>
        <dbReference type="HAMAP-Rule" id="MF_01382"/>
    </source>
</evidence>
<evidence type="ECO:0000256" key="2">
    <source>
        <dbReference type="SAM" id="MobiDB-lite"/>
    </source>
</evidence>
<sequence length="891" mass="101102">MKRLFEKVFGSESEREIKKIDKLADRVEALDEEYKKLSDQALQSKTAELKGRLSQGEALDDILPEAFATMREAAWRVLGMKHYRVQIYGAIILHQGRISEMKTGEGKTLMATLPVYLNALAGKGVHVVTVNDYLAQRDCEWMGKLYEFLGLSVGVIVHGITIEQRRAAYNADVTYGTNNEFGFDYLRDNMVIYQKDMVQREQNYAIVDEVDSILIDEARTPLIISGQGEKSTKLYHIVDQFVKTLKIEDDVSLDEKANSVTLTEDGGTKAEKAFGIENLADMNNMELSHHINQALKARNLMRLDKDYVVKDGEIIIVDDFTGRLMFGRRYSDGLHQAIEAKEGLQIQRESKTLATITFQNYFRMYRKLSGMTGTAKTEEDEFRAIYNMDVVEIPTNRVIVRDDQADGVYKGEQGKFEALAKDIEGRYKKGQPVLVGTISIEKSEELATLLKRKGIPCEVLNAKHHEREAEIVAQAGRKGIITIATNMAGRGTDIILGGNPEFLAKREMKKRGYADELIANATSHHETDDEELQAARKVYNDLLEKFKKETEQEHKDVIEAGGLHIIGTERHESRRIDNQLRGRAGRQGDPGSSKFYISLEDDLMRLFGGDKMLSIVEKMGLEDDEAIEHGMLSRSIENAQKKVEGRNFGIRKHVLQYDDVMNKQREVIYGERKKVLAGESLKDHVLNMARNIINEAVAIYTADAKYPEEWDLVGLGEYLAGIYMQRATLSFDNIEELTVETLQEQIYETSEKLYEAKEEEIEAERMRELERIIVLQVIDTKWMDHIDAMDQLRQGIGLRAIGQIDPVRAYQVEGFDMFNAMINSIQEDTVKYLFNVEPQAKVERKQVAKPIEASHGDGNRKKAPVVKEKEAGRNDPCPCGSGKKYKKCCGE</sequence>
<dbReference type="EC" id="7.4.2.8" evidence="1"/>
<dbReference type="EMBL" id="CP000724">
    <property type="protein sequence ID" value="ABR47015.1"/>
    <property type="molecule type" value="Genomic_DNA"/>
</dbReference>
<dbReference type="SMR" id="A6TLE7"/>
<dbReference type="STRING" id="293826.Amet_0790"/>
<dbReference type="KEGG" id="amt:Amet_0790"/>
<dbReference type="eggNOG" id="COG0653">
    <property type="taxonomic scope" value="Bacteria"/>
</dbReference>
<dbReference type="HOGENOM" id="CLU_005314_3_0_9"/>
<dbReference type="OrthoDB" id="9805579at2"/>
<dbReference type="Proteomes" id="UP000001572">
    <property type="component" value="Chromosome"/>
</dbReference>
<dbReference type="GO" id="GO:0031522">
    <property type="term" value="C:cell envelope Sec protein transport complex"/>
    <property type="evidence" value="ECO:0007669"/>
    <property type="project" value="TreeGrafter"/>
</dbReference>
<dbReference type="GO" id="GO:0005829">
    <property type="term" value="C:cytosol"/>
    <property type="evidence" value="ECO:0007669"/>
    <property type="project" value="TreeGrafter"/>
</dbReference>
<dbReference type="GO" id="GO:0005886">
    <property type="term" value="C:plasma membrane"/>
    <property type="evidence" value="ECO:0007669"/>
    <property type="project" value="UniProtKB-SubCell"/>
</dbReference>
<dbReference type="GO" id="GO:0005524">
    <property type="term" value="F:ATP binding"/>
    <property type="evidence" value="ECO:0007669"/>
    <property type="project" value="UniProtKB-UniRule"/>
</dbReference>
<dbReference type="GO" id="GO:0046872">
    <property type="term" value="F:metal ion binding"/>
    <property type="evidence" value="ECO:0007669"/>
    <property type="project" value="UniProtKB-KW"/>
</dbReference>
<dbReference type="GO" id="GO:0008564">
    <property type="term" value="F:protein-exporting ATPase activity"/>
    <property type="evidence" value="ECO:0007669"/>
    <property type="project" value="UniProtKB-EC"/>
</dbReference>
<dbReference type="GO" id="GO:0065002">
    <property type="term" value="P:intracellular protein transmembrane transport"/>
    <property type="evidence" value="ECO:0007669"/>
    <property type="project" value="UniProtKB-UniRule"/>
</dbReference>
<dbReference type="GO" id="GO:0017038">
    <property type="term" value="P:protein import"/>
    <property type="evidence" value="ECO:0007669"/>
    <property type="project" value="InterPro"/>
</dbReference>
<dbReference type="GO" id="GO:0006605">
    <property type="term" value="P:protein targeting"/>
    <property type="evidence" value="ECO:0007669"/>
    <property type="project" value="UniProtKB-UniRule"/>
</dbReference>
<dbReference type="GO" id="GO:0043952">
    <property type="term" value="P:protein transport by the Sec complex"/>
    <property type="evidence" value="ECO:0007669"/>
    <property type="project" value="TreeGrafter"/>
</dbReference>
<dbReference type="CDD" id="cd17928">
    <property type="entry name" value="DEXDc_SecA"/>
    <property type="match status" value="1"/>
</dbReference>
<dbReference type="CDD" id="cd18803">
    <property type="entry name" value="SF2_C_secA"/>
    <property type="match status" value="1"/>
</dbReference>
<dbReference type="FunFam" id="1.10.3060.10:FF:000002">
    <property type="entry name" value="Preprotein translocase subunit SecA"/>
    <property type="match status" value="1"/>
</dbReference>
<dbReference type="FunFam" id="3.40.50.300:FF:000113">
    <property type="entry name" value="Preprotein translocase subunit SecA"/>
    <property type="match status" value="1"/>
</dbReference>
<dbReference type="FunFam" id="3.90.1440.10:FF:000001">
    <property type="entry name" value="Preprotein translocase subunit SecA"/>
    <property type="match status" value="1"/>
</dbReference>
<dbReference type="FunFam" id="3.40.50.300:FF:000334">
    <property type="entry name" value="Protein translocase subunit SecA"/>
    <property type="match status" value="1"/>
</dbReference>
<dbReference type="Gene3D" id="1.10.3060.10">
    <property type="entry name" value="Helical scaffold and wing domains of SecA"/>
    <property type="match status" value="1"/>
</dbReference>
<dbReference type="Gene3D" id="3.40.50.300">
    <property type="entry name" value="P-loop containing nucleotide triphosphate hydrolases"/>
    <property type="match status" value="2"/>
</dbReference>
<dbReference type="Gene3D" id="3.90.1440.10">
    <property type="entry name" value="SecA, preprotein cross-linking domain"/>
    <property type="match status" value="1"/>
</dbReference>
<dbReference type="HAMAP" id="MF_01382">
    <property type="entry name" value="SecA"/>
    <property type="match status" value="1"/>
</dbReference>
<dbReference type="InterPro" id="IPR014001">
    <property type="entry name" value="Helicase_ATP-bd"/>
</dbReference>
<dbReference type="InterPro" id="IPR027417">
    <property type="entry name" value="P-loop_NTPase"/>
</dbReference>
<dbReference type="InterPro" id="IPR004027">
    <property type="entry name" value="SEC_C_motif"/>
</dbReference>
<dbReference type="InterPro" id="IPR000185">
    <property type="entry name" value="SecA"/>
</dbReference>
<dbReference type="InterPro" id="IPR020937">
    <property type="entry name" value="SecA_CS"/>
</dbReference>
<dbReference type="InterPro" id="IPR011115">
    <property type="entry name" value="SecA_DEAD"/>
</dbReference>
<dbReference type="InterPro" id="IPR014018">
    <property type="entry name" value="SecA_motor_DEAD"/>
</dbReference>
<dbReference type="InterPro" id="IPR011130">
    <property type="entry name" value="SecA_preprotein_X-link_dom"/>
</dbReference>
<dbReference type="InterPro" id="IPR044722">
    <property type="entry name" value="SecA_SF2_C"/>
</dbReference>
<dbReference type="InterPro" id="IPR011116">
    <property type="entry name" value="SecA_Wing/Scaffold"/>
</dbReference>
<dbReference type="InterPro" id="IPR036266">
    <property type="entry name" value="SecA_Wing/Scaffold_sf"/>
</dbReference>
<dbReference type="InterPro" id="IPR036670">
    <property type="entry name" value="SecA_X-link_sf"/>
</dbReference>
<dbReference type="NCBIfam" id="NF009538">
    <property type="entry name" value="PRK12904.1"/>
    <property type="match status" value="1"/>
</dbReference>
<dbReference type="NCBIfam" id="TIGR00963">
    <property type="entry name" value="secA"/>
    <property type="match status" value="1"/>
</dbReference>
<dbReference type="PANTHER" id="PTHR30612:SF0">
    <property type="entry name" value="CHLOROPLAST PROTEIN-TRANSPORTING ATPASE"/>
    <property type="match status" value="1"/>
</dbReference>
<dbReference type="PANTHER" id="PTHR30612">
    <property type="entry name" value="SECA INNER MEMBRANE COMPONENT OF SEC PROTEIN SECRETION SYSTEM"/>
    <property type="match status" value="1"/>
</dbReference>
<dbReference type="Pfam" id="PF21090">
    <property type="entry name" value="P-loop_SecA"/>
    <property type="match status" value="1"/>
</dbReference>
<dbReference type="Pfam" id="PF02810">
    <property type="entry name" value="SEC-C"/>
    <property type="match status" value="1"/>
</dbReference>
<dbReference type="Pfam" id="PF07517">
    <property type="entry name" value="SecA_DEAD"/>
    <property type="match status" value="1"/>
</dbReference>
<dbReference type="Pfam" id="PF01043">
    <property type="entry name" value="SecA_PP_bind"/>
    <property type="match status" value="1"/>
</dbReference>
<dbReference type="Pfam" id="PF07516">
    <property type="entry name" value="SecA_SW"/>
    <property type="match status" value="1"/>
</dbReference>
<dbReference type="PRINTS" id="PR00906">
    <property type="entry name" value="SECA"/>
</dbReference>
<dbReference type="SMART" id="SM00957">
    <property type="entry name" value="SecA_DEAD"/>
    <property type="match status" value="1"/>
</dbReference>
<dbReference type="SMART" id="SM00958">
    <property type="entry name" value="SecA_PP_bind"/>
    <property type="match status" value="1"/>
</dbReference>
<dbReference type="SUPFAM" id="SSF81886">
    <property type="entry name" value="Helical scaffold and wing domains of SecA"/>
    <property type="match status" value="1"/>
</dbReference>
<dbReference type="SUPFAM" id="SSF52540">
    <property type="entry name" value="P-loop containing nucleoside triphosphate hydrolases"/>
    <property type="match status" value="2"/>
</dbReference>
<dbReference type="SUPFAM" id="SSF81767">
    <property type="entry name" value="Pre-protein crosslinking domain of SecA"/>
    <property type="match status" value="1"/>
</dbReference>
<dbReference type="PROSITE" id="PS01312">
    <property type="entry name" value="SECA"/>
    <property type="match status" value="1"/>
</dbReference>
<dbReference type="PROSITE" id="PS51196">
    <property type="entry name" value="SECA_MOTOR_DEAD"/>
    <property type="match status" value="1"/>
</dbReference>